<protein>
    <recommendedName>
        <fullName evidence="1">DNA replication and repair protein RecF</fullName>
    </recommendedName>
</protein>
<comment type="function">
    <text evidence="1">The RecF protein is involved in DNA metabolism; it is required for DNA replication and normal SOS inducibility. RecF binds preferentially to single-stranded, linear DNA. It also seems to bind ATP.</text>
</comment>
<comment type="subcellular location">
    <subcellularLocation>
        <location evidence="1">Cytoplasm</location>
    </subcellularLocation>
</comment>
<comment type="similarity">
    <text evidence="1">Belongs to the RecF family.</text>
</comment>
<evidence type="ECO:0000255" key="1">
    <source>
        <dbReference type="HAMAP-Rule" id="MF_00365"/>
    </source>
</evidence>
<proteinExistence type="inferred from homology"/>
<organism>
    <name type="scientific">Rickettsia conorii (strain ATCC VR-613 / Malish 7)</name>
    <dbReference type="NCBI Taxonomy" id="272944"/>
    <lineage>
        <taxon>Bacteria</taxon>
        <taxon>Pseudomonadati</taxon>
        <taxon>Pseudomonadota</taxon>
        <taxon>Alphaproteobacteria</taxon>
        <taxon>Rickettsiales</taxon>
        <taxon>Rickettsiaceae</taxon>
        <taxon>Rickettsieae</taxon>
        <taxon>Rickettsia</taxon>
        <taxon>spotted fever group</taxon>
    </lineage>
</organism>
<feature type="chain" id="PRO_0000196449" description="DNA replication and repair protein RecF">
    <location>
        <begin position="1"/>
        <end position="360"/>
    </location>
</feature>
<feature type="binding site" evidence="1">
    <location>
        <begin position="33"/>
        <end position="40"/>
    </location>
    <ligand>
        <name>ATP</name>
        <dbReference type="ChEBI" id="CHEBI:30616"/>
    </ligand>
</feature>
<reference key="1">
    <citation type="journal article" date="2001" name="Science">
        <title>Mechanisms of evolution in Rickettsia conorii and R. prowazekii.</title>
        <authorList>
            <person name="Ogata H."/>
            <person name="Audic S."/>
            <person name="Renesto-Audiffren P."/>
            <person name="Fournier P.-E."/>
            <person name="Barbe V."/>
            <person name="Samson D."/>
            <person name="Roux V."/>
            <person name="Cossart P."/>
            <person name="Weissenbach J."/>
            <person name="Claverie J.-M."/>
            <person name="Raoult D."/>
        </authorList>
    </citation>
    <scope>NUCLEOTIDE SEQUENCE [LARGE SCALE GENOMIC DNA]</scope>
    <source>
        <strain>ATCC VR-613 / Malish 7</strain>
    </source>
</reference>
<dbReference type="EMBL" id="AE006914">
    <property type="protein sequence ID" value="AAL02570.1"/>
    <property type="molecule type" value="Genomic_DNA"/>
</dbReference>
<dbReference type="PIR" id="H97703">
    <property type="entry name" value="H97703"/>
</dbReference>
<dbReference type="RefSeq" id="WP_010976720.1">
    <property type="nucleotide sequence ID" value="NC_003103.1"/>
</dbReference>
<dbReference type="SMR" id="Q92JN5"/>
<dbReference type="GeneID" id="928627"/>
<dbReference type="KEGG" id="rco:RC0032"/>
<dbReference type="PATRIC" id="fig|272944.4.peg.39"/>
<dbReference type="HOGENOM" id="CLU_040267_2_0_5"/>
<dbReference type="Proteomes" id="UP000000816">
    <property type="component" value="Chromosome"/>
</dbReference>
<dbReference type="GO" id="GO:0005737">
    <property type="term" value="C:cytoplasm"/>
    <property type="evidence" value="ECO:0007669"/>
    <property type="project" value="UniProtKB-SubCell"/>
</dbReference>
<dbReference type="GO" id="GO:0005524">
    <property type="term" value="F:ATP binding"/>
    <property type="evidence" value="ECO:0007669"/>
    <property type="project" value="UniProtKB-UniRule"/>
</dbReference>
<dbReference type="GO" id="GO:0003697">
    <property type="term" value="F:single-stranded DNA binding"/>
    <property type="evidence" value="ECO:0007669"/>
    <property type="project" value="UniProtKB-UniRule"/>
</dbReference>
<dbReference type="GO" id="GO:0006260">
    <property type="term" value="P:DNA replication"/>
    <property type="evidence" value="ECO:0007669"/>
    <property type="project" value="UniProtKB-UniRule"/>
</dbReference>
<dbReference type="GO" id="GO:0000731">
    <property type="term" value="P:DNA synthesis involved in DNA repair"/>
    <property type="evidence" value="ECO:0007669"/>
    <property type="project" value="TreeGrafter"/>
</dbReference>
<dbReference type="GO" id="GO:0006302">
    <property type="term" value="P:double-strand break repair"/>
    <property type="evidence" value="ECO:0007669"/>
    <property type="project" value="TreeGrafter"/>
</dbReference>
<dbReference type="GO" id="GO:0009432">
    <property type="term" value="P:SOS response"/>
    <property type="evidence" value="ECO:0007669"/>
    <property type="project" value="UniProtKB-UniRule"/>
</dbReference>
<dbReference type="Gene3D" id="3.40.50.300">
    <property type="entry name" value="P-loop containing nucleotide triphosphate hydrolases"/>
    <property type="match status" value="1"/>
</dbReference>
<dbReference type="Gene3D" id="1.20.1050.90">
    <property type="entry name" value="RecF/RecN/SMC, N-terminal domain"/>
    <property type="match status" value="1"/>
</dbReference>
<dbReference type="HAMAP" id="MF_00365">
    <property type="entry name" value="RecF"/>
    <property type="match status" value="1"/>
</dbReference>
<dbReference type="InterPro" id="IPR001238">
    <property type="entry name" value="DNA-binding_RecF"/>
</dbReference>
<dbReference type="InterPro" id="IPR018078">
    <property type="entry name" value="DNA-binding_RecF_CS"/>
</dbReference>
<dbReference type="InterPro" id="IPR027417">
    <property type="entry name" value="P-loop_NTPase"/>
</dbReference>
<dbReference type="InterPro" id="IPR003395">
    <property type="entry name" value="RecF/RecN/SMC_N"/>
</dbReference>
<dbReference type="InterPro" id="IPR042174">
    <property type="entry name" value="RecF_2"/>
</dbReference>
<dbReference type="NCBIfam" id="TIGR00611">
    <property type="entry name" value="recf"/>
    <property type="match status" value="1"/>
</dbReference>
<dbReference type="PANTHER" id="PTHR32182">
    <property type="entry name" value="DNA REPLICATION AND REPAIR PROTEIN RECF"/>
    <property type="match status" value="1"/>
</dbReference>
<dbReference type="PANTHER" id="PTHR32182:SF0">
    <property type="entry name" value="DNA REPLICATION AND REPAIR PROTEIN RECF"/>
    <property type="match status" value="1"/>
</dbReference>
<dbReference type="Pfam" id="PF02463">
    <property type="entry name" value="SMC_N"/>
    <property type="match status" value="1"/>
</dbReference>
<dbReference type="SUPFAM" id="SSF52540">
    <property type="entry name" value="P-loop containing nucleoside triphosphate hydrolases"/>
    <property type="match status" value="1"/>
</dbReference>
<dbReference type="PROSITE" id="PS00617">
    <property type="entry name" value="RECF_1"/>
    <property type="match status" value="1"/>
</dbReference>
<dbReference type="PROSITE" id="PS00618">
    <property type="entry name" value="RECF_2"/>
    <property type="match status" value="1"/>
</dbReference>
<accession>Q92JN5</accession>
<gene>
    <name evidence="1" type="primary">recF</name>
    <name type="ordered locus">RC0032</name>
</gene>
<name>RECF_RICCN</name>
<sequence>MKNIFLHSLNLENYRNFKNLELKTDNTPIILIGENGSGKTNILEAISLFYPGRGLRSAKLANVCKTSEDHCLVKALLQSKLGLAEFTTQFKRSSNRRITEYNESKIANNELSKFTSMVWLTPHMEGIFTSGSSDRRKFLDRIVYNFDPKHAELVSKYEYYMHERNKILVEDRRDDNWLKIIEEKMADISNHIANNRLKTLEFMQQAIDDLENEFPKADLSIDGIVEQKILNGKKNIVSFITAELYQTRSKDKLLGRTSFGVHKSDFLVKHQKKNILAKFCSTGEQKAILIAIILAEMNYAIKLTKIAPILLLDEVFVHLDDKRRQYLIEFLTGLNMQLWVTTTNLEGIDNFATKAQLIKL</sequence>
<keyword id="KW-0067">ATP-binding</keyword>
<keyword id="KW-0963">Cytoplasm</keyword>
<keyword id="KW-0227">DNA damage</keyword>
<keyword id="KW-0234">DNA repair</keyword>
<keyword id="KW-0235">DNA replication</keyword>
<keyword id="KW-0238">DNA-binding</keyword>
<keyword id="KW-0547">Nucleotide-binding</keyword>
<keyword id="KW-0742">SOS response</keyword>